<accession>B7LMX3</accession>
<proteinExistence type="inferred from homology"/>
<sequence length="470" mass="54000">MTPFMTEDFLLDTEFARRLYHEYAKDQPIFDYHCHLPPQQIAEDYRFKNLYDIWLKGDHYKWRAMRTNGVAERLCTGDASDREKFDAWAATVPHTIGNPLYHWTHLELRRPFGITGKLLSPSTADEIWNQCNELLAQDNFSARGIMQQMNVKMVGTTDDPIDSLEHHAEIAKDGSFTIKVLPSWRPDKAFNIEQATFNDYMAKLGEVSDTDIRRFADLQTALTKRLDHFAAHGCKVSDHALDVVMFAEANEAELDSILARRLAGETLSEHEVAQFKTAVLVFLGAEYARRGWVQQYHIGALRNNNLRQFKLLGPDVGFDSINDRPMAEELSKLLSKQNEENLLPKTILYCLNPRDNEVLGTMIGNFQGEGMPGKMQFGSGWWFNDQKDGMERQMTQLAQLGLLSRFVGMLTDSRSFLSYTRHEYFRRILCQMIGRWVEAGEAPADINLLGEMVKNICFNNARDYFAIELN</sequence>
<organism>
    <name type="scientific">Escherichia fergusonii (strain ATCC 35469 / DSM 13698 / CCUG 18766 / IAM 14443 / JCM 21226 / LMG 7866 / NBRC 102419 / NCTC 12128 / CDC 0568-73)</name>
    <dbReference type="NCBI Taxonomy" id="585054"/>
    <lineage>
        <taxon>Bacteria</taxon>
        <taxon>Pseudomonadati</taxon>
        <taxon>Pseudomonadota</taxon>
        <taxon>Gammaproteobacteria</taxon>
        <taxon>Enterobacterales</taxon>
        <taxon>Enterobacteriaceae</taxon>
        <taxon>Escherichia</taxon>
    </lineage>
</organism>
<comment type="catalytic activity">
    <reaction evidence="1">
        <text>D-glucuronate = D-fructuronate</text>
        <dbReference type="Rhea" id="RHEA:13049"/>
        <dbReference type="ChEBI" id="CHEBI:58720"/>
        <dbReference type="ChEBI" id="CHEBI:59863"/>
        <dbReference type="EC" id="5.3.1.12"/>
    </reaction>
</comment>
<comment type="catalytic activity">
    <reaction evidence="1">
        <text>aldehydo-D-galacturonate = keto-D-tagaturonate</text>
        <dbReference type="Rhea" id="RHEA:27702"/>
        <dbReference type="ChEBI" id="CHEBI:12952"/>
        <dbReference type="ChEBI" id="CHEBI:17886"/>
        <dbReference type="EC" id="5.3.1.12"/>
    </reaction>
</comment>
<comment type="pathway">
    <text evidence="1">Carbohydrate metabolism; pentose and glucuronate interconversion.</text>
</comment>
<comment type="similarity">
    <text evidence="1">Belongs to the metallo-dependent hydrolases superfamily. Uronate isomerase family.</text>
</comment>
<reference key="1">
    <citation type="journal article" date="2009" name="PLoS Genet.">
        <title>Organised genome dynamics in the Escherichia coli species results in highly diverse adaptive paths.</title>
        <authorList>
            <person name="Touchon M."/>
            <person name="Hoede C."/>
            <person name="Tenaillon O."/>
            <person name="Barbe V."/>
            <person name="Baeriswyl S."/>
            <person name="Bidet P."/>
            <person name="Bingen E."/>
            <person name="Bonacorsi S."/>
            <person name="Bouchier C."/>
            <person name="Bouvet O."/>
            <person name="Calteau A."/>
            <person name="Chiapello H."/>
            <person name="Clermont O."/>
            <person name="Cruveiller S."/>
            <person name="Danchin A."/>
            <person name="Diard M."/>
            <person name="Dossat C."/>
            <person name="Karoui M.E."/>
            <person name="Frapy E."/>
            <person name="Garry L."/>
            <person name="Ghigo J.M."/>
            <person name="Gilles A.M."/>
            <person name="Johnson J."/>
            <person name="Le Bouguenec C."/>
            <person name="Lescat M."/>
            <person name="Mangenot S."/>
            <person name="Martinez-Jehanne V."/>
            <person name="Matic I."/>
            <person name="Nassif X."/>
            <person name="Oztas S."/>
            <person name="Petit M.A."/>
            <person name="Pichon C."/>
            <person name="Rouy Z."/>
            <person name="Ruf C.S."/>
            <person name="Schneider D."/>
            <person name="Tourret J."/>
            <person name="Vacherie B."/>
            <person name="Vallenet D."/>
            <person name="Medigue C."/>
            <person name="Rocha E.P.C."/>
            <person name="Denamur E."/>
        </authorList>
    </citation>
    <scope>NUCLEOTIDE SEQUENCE [LARGE SCALE GENOMIC DNA]</scope>
    <source>
        <strain>ATCC 35469 / DSM 13698 / BCRC 15582 / CCUG 18766 / IAM 14443 / JCM 21226 / LMG 7866 / NBRC 102419 / NCTC 12128 / CDC 0568-73</strain>
    </source>
</reference>
<dbReference type="EC" id="5.3.1.12" evidence="1"/>
<dbReference type="EMBL" id="CU928158">
    <property type="protein sequence ID" value="CAQ91801.1"/>
    <property type="molecule type" value="Genomic_DNA"/>
</dbReference>
<dbReference type="RefSeq" id="WP_000187461.1">
    <property type="nucleotide sequence ID" value="NC_011740.1"/>
</dbReference>
<dbReference type="SMR" id="B7LMX3"/>
<dbReference type="GeneID" id="75059032"/>
<dbReference type="KEGG" id="efe:EFER_4383"/>
<dbReference type="HOGENOM" id="CLU_044465_1_0_6"/>
<dbReference type="OrthoDB" id="9766564at2"/>
<dbReference type="UniPathway" id="UPA00246"/>
<dbReference type="Proteomes" id="UP000000745">
    <property type="component" value="Chromosome"/>
</dbReference>
<dbReference type="GO" id="GO:0008880">
    <property type="term" value="F:glucuronate isomerase activity"/>
    <property type="evidence" value="ECO:0007669"/>
    <property type="project" value="UniProtKB-UniRule"/>
</dbReference>
<dbReference type="GO" id="GO:0019698">
    <property type="term" value="P:D-galacturonate catabolic process"/>
    <property type="evidence" value="ECO:0007669"/>
    <property type="project" value="TreeGrafter"/>
</dbReference>
<dbReference type="GO" id="GO:0042840">
    <property type="term" value="P:D-glucuronate catabolic process"/>
    <property type="evidence" value="ECO:0007669"/>
    <property type="project" value="TreeGrafter"/>
</dbReference>
<dbReference type="FunFam" id="1.10.2020.10:FF:000001">
    <property type="entry name" value="Uronate isomerase"/>
    <property type="match status" value="1"/>
</dbReference>
<dbReference type="Gene3D" id="3.20.20.140">
    <property type="entry name" value="Metal-dependent hydrolases"/>
    <property type="match status" value="1"/>
</dbReference>
<dbReference type="Gene3D" id="1.10.2020.10">
    <property type="entry name" value="uronate isomerase, domain 2, chain A"/>
    <property type="match status" value="1"/>
</dbReference>
<dbReference type="HAMAP" id="MF_00675">
    <property type="entry name" value="UxaC"/>
    <property type="match status" value="1"/>
</dbReference>
<dbReference type="InterPro" id="IPR032466">
    <property type="entry name" value="Metal_Hydrolase"/>
</dbReference>
<dbReference type="InterPro" id="IPR003766">
    <property type="entry name" value="Uronate_isomerase"/>
</dbReference>
<dbReference type="NCBIfam" id="NF002794">
    <property type="entry name" value="PRK02925.1"/>
    <property type="match status" value="1"/>
</dbReference>
<dbReference type="PANTHER" id="PTHR30068">
    <property type="entry name" value="URONATE ISOMERASE"/>
    <property type="match status" value="1"/>
</dbReference>
<dbReference type="PANTHER" id="PTHR30068:SF4">
    <property type="entry name" value="URONATE ISOMERASE"/>
    <property type="match status" value="1"/>
</dbReference>
<dbReference type="Pfam" id="PF02614">
    <property type="entry name" value="UxaC"/>
    <property type="match status" value="1"/>
</dbReference>
<dbReference type="SUPFAM" id="SSF51556">
    <property type="entry name" value="Metallo-dependent hydrolases"/>
    <property type="match status" value="1"/>
</dbReference>
<evidence type="ECO:0000255" key="1">
    <source>
        <dbReference type="HAMAP-Rule" id="MF_00675"/>
    </source>
</evidence>
<name>UXAC_ESCF3</name>
<protein>
    <recommendedName>
        <fullName evidence="1">Uronate isomerase</fullName>
        <ecNumber evidence="1">5.3.1.12</ecNumber>
    </recommendedName>
    <alternativeName>
        <fullName evidence="1">Glucuronate isomerase</fullName>
    </alternativeName>
    <alternativeName>
        <fullName evidence="1">Uronic isomerase</fullName>
    </alternativeName>
</protein>
<gene>
    <name evidence="1" type="primary">uxaC</name>
    <name type="ordered locus">EFER_4383</name>
</gene>
<feature type="chain" id="PRO_1000131596" description="Uronate isomerase">
    <location>
        <begin position="1"/>
        <end position="470"/>
    </location>
</feature>
<keyword id="KW-0413">Isomerase</keyword>